<reference key="1">
    <citation type="submission" date="2007-06" db="EMBL/GenBank/DDBJ databases">
        <title>Complete sequence of chromosome of Staphylococcus aureus subsp. aureus JH1.</title>
        <authorList>
            <consortium name="US DOE Joint Genome Institute"/>
            <person name="Copeland A."/>
            <person name="Lucas S."/>
            <person name="Lapidus A."/>
            <person name="Barry K."/>
            <person name="Detter J.C."/>
            <person name="Glavina del Rio T."/>
            <person name="Hammon N."/>
            <person name="Israni S."/>
            <person name="Dalin E."/>
            <person name="Tice H."/>
            <person name="Pitluck S."/>
            <person name="Chain P."/>
            <person name="Malfatti S."/>
            <person name="Shin M."/>
            <person name="Vergez L."/>
            <person name="Schmutz J."/>
            <person name="Larimer F."/>
            <person name="Land M."/>
            <person name="Hauser L."/>
            <person name="Kyrpides N."/>
            <person name="Ivanova N."/>
            <person name="Tomasz A."/>
            <person name="Richardson P."/>
        </authorList>
    </citation>
    <scope>NUCLEOTIDE SEQUENCE [LARGE SCALE GENOMIC DNA]</scope>
    <source>
        <strain>JH1</strain>
    </source>
</reference>
<evidence type="ECO:0000255" key="1">
    <source>
        <dbReference type="HAMAP-Rule" id="MF_01575"/>
    </source>
</evidence>
<dbReference type="EMBL" id="CP000736">
    <property type="protein sequence ID" value="ABR52384.1"/>
    <property type="molecule type" value="Genomic_DNA"/>
</dbReference>
<dbReference type="SMR" id="A6U1R6"/>
<dbReference type="KEGG" id="sah:SaurJH1_1535"/>
<dbReference type="HOGENOM" id="CLU_105319_0_0_9"/>
<dbReference type="Gene3D" id="3.40.50.450">
    <property type="match status" value="1"/>
</dbReference>
<dbReference type="HAMAP" id="MF_01575">
    <property type="entry name" value="UPF0398"/>
    <property type="match status" value="1"/>
</dbReference>
<dbReference type="InterPro" id="IPR010697">
    <property type="entry name" value="YspA"/>
</dbReference>
<dbReference type="NCBIfam" id="NF010181">
    <property type="entry name" value="PRK13660.1"/>
    <property type="match status" value="1"/>
</dbReference>
<dbReference type="PANTHER" id="PTHR38440:SF1">
    <property type="entry name" value="UPF0398 PROTEIN SPR0331"/>
    <property type="match status" value="1"/>
</dbReference>
<dbReference type="PANTHER" id="PTHR38440">
    <property type="entry name" value="UPF0398 PROTEIN YPSA"/>
    <property type="match status" value="1"/>
</dbReference>
<dbReference type="Pfam" id="PF06908">
    <property type="entry name" value="YpsA"/>
    <property type="match status" value="1"/>
</dbReference>
<dbReference type="PIRSF" id="PIRSF021290">
    <property type="entry name" value="DUF1273"/>
    <property type="match status" value="1"/>
</dbReference>
<dbReference type="SUPFAM" id="SSF102405">
    <property type="entry name" value="MCP/YpsA-like"/>
    <property type="match status" value="1"/>
</dbReference>
<accession>A6U1R6</accession>
<comment type="similarity">
    <text evidence="1">Belongs to the UPF0398 family.</text>
</comment>
<sequence>MVKTVYVTGYKSFELNIFKDDAPEVHYLKQFIKHKIEQLLDEGLEWVLIQGQMGIELWTAEVVIELQRTYDSLKFAVITPFQGHTEKWNEHNQSKYANIIKHADYVDSIFHTSYQGPFQFKQADQFMLEHSDQTLLIYDEEQEASPKFFKQMLVDFMDKTNYTCDIVTFDELTAFINDLQWSEDQSF</sequence>
<proteinExistence type="inferred from homology"/>
<gene>
    <name type="ordered locus">SaurJH1_1535</name>
</gene>
<feature type="chain" id="PRO_1000087884" description="UPF0398 protein SaurJH1_1535">
    <location>
        <begin position="1"/>
        <end position="187"/>
    </location>
</feature>
<organism>
    <name type="scientific">Staphylococcus aureus (strain JH1)</name>
    <dbReference type="NCBI Taxonomy" id="359787"/>
    <lineage>
        <taxon>Bacteria</taxon>
        <taxon>Bacillati</taxon>
        <taxon>Bacillota</taxon>
        <taxon>Bacilli</taxon>
        <taxon>Bacillales</taxon>
        <taxon>Staphylococcaceae</taxon>
        <taxon>Staphylococcus</taxon>
    </lineage>
</organism>
<name>Y1535_STAA2</name>
<protein>
    <recommendedName>
        <fullName evidence="1">UPF0398 protein SaurJH1_1535</fullName>
    </recommendedName>
</protein>